<gene>
    <name evidence="1" type="primary">xpt</name>
    <name type="ordered locus">USA300HOU_0411</name>
</gene>
<dbReference type="EC" id="2.4.2.22" evidence="1"/>
<dbReference type="EMBL" id="CP000730">
    <property type="protein sequence ID" value="ABX28439.1"/>
    <property type="molecule type" value="Genomic_DNA"/>
</dbReference>
<dbReference type="RefSeq" id="WP_000421410.1">
    <property type="nucleotide sequence ID" value="NC_010079.1"/>
</dbReference>
<dbReference type="SMR" id="A8Z0Q8"/>
<dbReference type="GeneID" id="66838694"/>
<dbReference type="KEGG" id="sax:USA300HOU_0411"/>
<dbReference type="HOGENOM" id="CLU_099015_0_0_9"/>
<dbReference type="UniPathway" id="UPA00602">
    <property type="reaction ID" value="UER00658"/>
</dbReference>
<dbReference type="GO" id="GO:0005737">
    <property type="term" value="C:cytoplasm"/>
    <property type="evidence" value="ECO:0007669"/>
    <property type="project" value="UniProtKB-SubCell"/>
</dbReference>
<dbReference type="GO" id="GO:0000310">
    <property type="term" value="F:xanthine phosphoribosyltransferase activity"/>
    <property type="evidence" value="ECO:0007669"/>
    <property type="project" value="UniProtKB-UniRule"/>
</dbReference>
<dbReference type="GO" id="GO:0006166">
    <property type="term" value="P:purine ribonucleoside salvage"/>
    <property type="evidence" value="ECO:0007669"/>
    <property type="project" value="UniProtKB-KW"/>
</dbReference>
<dbReference type="GO" id="GO:0046110">
    <property type="term" value="P:xanthine metabolic process"/>
    <property type="evidence" value="ECO:0007669"/>
    <property type="project" value="InterPro"/>
</dbReference>
<dbReference type="GO" id="GO:0032265">
    <property type="term" value="P:XMP salvage"/>
    <property type="evidence" value="ECO:0007669"/>
    <property type="project" value="UniProtKB-UniRule"/>
</dbReference>
<dbReference type="CDD" id="cd06223">
    <property type="entry name" value="PRTases_typeI"/>
    <property type="match status" value="1"/>
</dbReference>
<dbReference type="Gene3D" id="3.40.50.2020">
    <property type="match status" value="1"/>
</dbReference>
<dbReference type="HAMAP" id="MF_01184">
    <property type="entry name" value="XPRTase"/>
    <property type="match status" value="1"/>
</dbReference>
<dbReference type="InterPro" id="IPR000836">
    <property type="entry name" value="PRibTrfase_dom"/>
</dbReference>
<dbReference type="InterPro" id="IPR029057">
    <property type="entry name" value="PRTase-like"/>
</dbReference>
<dbReference type="InterPro" id="IPR050118">
    <property type="entry name" value="Pur/Pyrimidine_PRTase"/>
</dbReference>
<dbReference type="InterPro" id="IPR010079">
    <property type="entry name" value="Xanthine_PRibTrfase"/>
</dbReference>
<dbReference type="NCBIfam" id="NF006671">
    <property type="entry name" value="PRK09219.1"/>
    <property type="match status" value="1"/>
</dbReference>
<dbReference type="NCBIfam" id="TIGR01744">
    <property type="entry name" value="XPRTase"/>
    <property type="match status" value="1"/>
</dbReference>
<dbReference type="PANTHER" id="PTHR43864">
    <property type="entry name" value="HYPOXANTHINE/GUANINE PHOSPHORIBOSYLTRANSFERASE"/>
    <property type="match status" value="1"/>
</dbReference>
<dbReference type="PANTHER" id="PTHR43864:SF1">
    <property type="entry name" value="XANTHINE PHOSPHORIBOSYLTRANSFERASE"/>
    <property type="match status" value="1"/>
</dbReference>
<dbReference type="SUPFAM" id="SSF53271">
    <property type="entry name" value="PRTase-like"/>
    <property type="match status" value="1"/>
</dbReference>
<feature type="chain" id="PRO_0000339753" description="Xanthine phosphoribosyltransferase">
    <location>
        <begin position="1"/>
        <end position="192"/>
    </location>
</feature>
<feature type="binding site" evidence="1">
    <location>
        <position position="20"/>
    </location>
    <ligand>
        <name>xanthine</name>
        <dbReference type="ChEBI" id="CHEBI:17712"/>
    </ligand>
</feature>
<feature type="binding site" evidence="1">
    <location>
        <position position="27"/>
    </location>
    <ligand>
        <name>xanthine</name>
        <dbReference type="ChEBI" id="CHEBI:17712"/>
    </ligand>
</feature>
<feature type="binding site" evidence="1">
    <location>
        <begin position="128"/>
        <end position="132"/>
    </location>
    <ligand>
        <name>5-phospho-alpha-D-ribose 1-diphosphate</name>
        <dbReference type="ChEBI" id="CHEBI:58017"/>
    </ligand>
</feature>
<feature type="binding site" evidence="1">
    <location>
        <position position="156"/>
    </location>
    <ligand>
        <name>xanthine</name>
        <dbReference type="ChEBI" id="CHEBI:17712"/>
    </ligand>
</feature>
<evidence type="ECO:0000255" key="1">
    <source>
        <dbReference type="HAMAP-Rule" id="MF_01184"/>
    </source>
</evidence>
<keyword id="KW-0963">Cytoplasm</keyword>
<keyword id="KW-0328">Glycosyltransferase</keyword>
<keyword id="KW-0660">Purine salvage</keyword>
<keyword id="KW-0808">Transferase</keyword>
<accession>A8Z0Q8</accession>
<proteinExistence type="inferred from homology"/>
<name>XPT_STAAT</name>
<reference key="1">
    <citation type="journal article" date="2007" name="BMC Microbiol.">
        <title>Subtle genetic changes enhance virulence of methicillin resistant and sensitive Staphylococcus aureus.</title>
        <authorList>
            <person name="Highlander S.K."/>
            <person name="Hulten K.G."/>
            <person name="Qin X."/>
            <person name="Jiang H."/>
            <person name="Yerrapragada S."/>
            <person name="Mason E.O. Jr."/>
            <person name="Shang Y."/>
            <person name="Williams T.M."/>
            <person name="Fortunov R.M."/>
            <person name="Liu Y."/>
            <person name="Igboeli O."/>
            <person name="Petrosino J."/>
            <person name="Tirumalai M."/>
            <person name="Uzman A."/>
            <person name="Fox G.E."/>
            <person name="Cardenas A.M."/>
            <person name="Muzny D.M."/>
            <person name="Hemphill L."/>
            <person name="Ding Y."/>
            <person name="Dugan S."/>
            <person name="Blyth P.R."/>
            <person name="Buhay C.J."/>
            <person name="Dinh H.H."/>
            <person name="Hawes A.C."/>
            <person name="Holder M."/>
            <person name="Kovar C.L."/>
            <person name="Lee S.L."/>
            <person name="Liu W."/>
            <person name="Nazareth L.V."/>
            <person name="Wang Q."/>
            <person name="Zhou J."/>
            <person name="Kaplan S.L."/>
            <person name="Weinstock G.M."/>
        </authorList>
    </citation>
    <scope>NUCLEOTIDE SEQUENCE [LARGE SCALE GENOMIC DNA]</scope>
    <source>
        <strain>USA300 / TCH1516</strain>
    </source>
</reference>
<protein>
    <recommendedName>
        <fullName evidence="1">Xanthine phosphoribosyltransferase</fullName>
        <shortName evidence="1">XPRTase</shortName>
        <ecNumber evidence="1">2.4.2.22</ecNumber>
    </recommendedName>
</protein>
<sequence length="192" mass="20884">MELLGQKVKEDGVVIDEKILKVDGFLNHQIDAKLMNEVGRTFYEQFKDKGITKILTIEASGIAPAIMAALHFDVPCLFAKKAKPSTLTDGYYETSIHSFTKNKTSTVIVSKEFLSEEDTVLIIDDFLANGDASLGLYDIAQQANAKTAGIGIVVEKSFQNGHQRLEEAGLTVSSLCKVASLEGNKVTLVGEE</sequence>
<comment type="function">
    <text evidence="1">Converts the preformed base xanthine, a product of nucleic acid breakdown, to xanthosine 5'-monophosphate (XMP), so it can be reused for RNA or DNA synthesis.</text>
</comment>
<comment type="catalytic activity">
    <reaction evidence="1">
        <text>XMP + diphosphate = xanthine + 5-phospho-alpha-D-ribose 1-diphosphate</text>
        <dbReference type="Rhea" id="RHEA:10800"/>
        <dbReference type="ChEBI" id="CHEBI:17712"/>
        <dbReference type="ChEBI" id="CHEBI:33019"/>
        <dbReference type="ChEBI" id="CHEBI:57464"/>
        <dbReference type="ChEBI" id="CHEBI:58017"/>
        <dbReference type="EC" id="2.4.2.22"/>
    </reaction>
</comment>
<comment type="pathway">
    <text evidence="1">Purine metabolism; XMP biosynthesis via salvage pathway; XMP from xanthine: step 1/1.</text>
</comment>
<comment type="subunit">
    <text evidence="1">Homodimer.</text>
</comment>
<comment type="subcellular location">
    <subcellularLocation>
        <location evidence="1">Cytoplasm</location>
    </subcellularLocation>
</comment>
<comment type="similarity">
    <text evidence="1">Belongs to the purine/pyrimidine phosphoribosyltransferase family. Xpt subfamily.</text>
</comment>
<organism>
    <name type="scientific">Staphylococcus aureus (strain USA300 / TCH1516)</name>
    <dbReference type="NCBI Taxonomy" id="451516"/>
    <lineage>
        <taxon>Bacteria</taxon>
        <taxon>Bacillati</taxon>
        <taxon>Bacillota</taxon>
        <taxon>Bacilli</taxon>
        <taxon>Bacillales</taxon>
        <taxon>Staphylococcaceae</taxon>
        <taxon>Staphylococcus</taxon>
    </lineage>
</organism>